<gene>
    <name evidence="1" type="primary">thiG</name>
    <name type="ordered locus">BCG9842_B4542</name>
</gene>
<feature type="chain" id="PRO_1000124601" description="Thiazole synthase">
    <location>
        <begin position="1"/>
        <end position="256"/>
    </location>
</feature>
<feature type="active site" description="Schiff-base intermediate with DXP" evidence="1">
    <location>
        <position position="96"/>
    </location>
</feature>
<feature type="binding site" evidence="1">
    <location>
        <position position="157"/>
    </location>
    <ligand>
        <name>1-deoxy-D-xylulose 5-phosphate</name>
        <dbReference type="ChEBI" id="CHEBI:57792"/>
    </ligand>
</feature>
<feature type="binding site" evidence="1">
    <location>
        <begin position="183"/>
        <end position="184"/>
    </location>
    <ligand>
        <name>1-deoxy-D-xylulose 5-phosphate</name>
        <dbReference type="ChEBI" id="CHEBI:57792"/>
    </ligand>
</feature>
<feature type="binding site" evidence="1">
    <location>
        <begin position="205"/>
        <end position="206"/>
    </location>
    <ligand>
        <name>1-deoxy-D-xylulose 5-phosphate</name>
        <dbReference type="ChEBI" id="CHEBI:57792"/>
    </ligand>
</feature>
<name>THIG_BACC2</name>
<proteinExistence type="inferred from homology"/>
<organism>
    <name type="scientific">Bacillus cereus (strain G9842)</name>
    <dbReference type="NCBI Taxonomy" id="405531"/>
    <lineage>
        <taxon>Bacteria</taxon>
        <taxon>Bacillati</taxon>
        <taxon>Bacillota</taxon>
        <taxon>Bacilli</taxon>
        <taxon>Bacillales</taxon>
        <taxon>Bacillaceae</taxon>
        <taxon>Bacillus</taxon>
        <taxon>Bacillus cereus group</taxon>
    </lineage>
</organism>
<protein>
    <recommendedName>
        <fullName evidence="1">Thiazole synthase</fullName>
        <ecNumber evidence="1">2.8.1.10</ecNumber>
    </recommendedName>
</protein>
<dbReference type="EC" id="2.8.1.10" evidence="1"/>
<dbReference type="EMBL" id="CP001186">
    <property type="protein sequence ID" value="ACK93619.1"/>
    <property type="molecule type" value="Genomic_DNA"/>
</dbReference>
<dbReference type="RefSeq" id="WP_000931981.1">
    <property type="nucleotide sequence ID" value="NC_011772.1"/>
</dbReference>
<dbReference type="SMR" id="B7IY02"/>
<dbReference type="GeneID" id="93010294"/>
<dbReference type="KEGG" id="bcg:BCG9842_B4542"/>
<dbReference type="HOGENOM" id="CLU_062233_1_0_9"/>
<dbReference type="UniPathway" id="UPA00060"/>
<dbReference type="Proteomes" id="UP000006744">
    <property type="component" value="Chromosome"/>
</dbReference>
<dbReference type="GO" id="GO:0005737">
    <property type="term" value="C:cytoplasm"/>
    <property type="evidence" value="ECO:0007669"/>
    <property type="project" value="UniProtKB-SubCell"/>
</dbReference>
<dbReference type="GO" id="GO:1990107">
    <property type="term" value="F:thiazole synthase activity"/>
    <property type="evidence" value="ECO:0007669"/>
    <property type="project" value="UniProtKB-EC"/>
</dbReference>
<dbReference type="GO" id="GO:0009229">
    <property type="term" value="P:thiamine diphosphate biosynthetic process"/>
    <property type="evidence" value="ECO:0007669"/>
    <property type="project" value="UniProtKB-UniRule"/>
</dbReference>
<dbReference type="CDD" id="cd04728">
    <property type="entry name" value="ThiG"/>
    <property type="match status" value="1"/>
</dbReference>
<dbReference type="FunFam" id="3.20.20.70:FF:000049">
    <property type="entry name" value="Thiazole synthase"/>
    <property type="match status" value="1"/>
</dbReference>
<dbReference type="Gene3D" id="3.20.20.70">
    <property type="entry name" value="Aldolase class I"/>
    <property type="match status" value="1"/>
</dbReference>
<dbReference type="HAMAP" id="MF_00443">
    <property type="entry name" value="ThiG"/>
    <property type="match status" value="1"/>
</dbReference>
<dbReference type="InterPro" id="IPR013785">
    <property type="entry name" value="Aldolase_TIM"/>
</dbReference>
<dbReference type="InterPro" id="IPR033983">
    <property type="entry name" value="Thiazole_synthase_ThiG"/>
</dbReference>
<dbReference type="InterPro" id="IPR008867">
    <property type="entry name" value="ThiG"/>
</dbReference>
<dbReference type="PANTHER" id="PTHR34266">
    <property type="entry name" value="THIAZOLE SYNTHASE"/>
    <property type="match status" value="1"/>
</dbReference>
<dbReference type="PANTHER" id="PTHR34266:SF2">
    <property type="entry name" value="THIAZOLE SYNTHASE"/>
    <property type="match status" value="1"/>
</dbReference>
<dbReference type="Pfam" id="PF05690">
    <property type="entry name" value="ThiG"/>
    <property type="match status" value="1"/>
</dbReference>
<dbReference type="SUPFAM" id="SSF110399">
    <property type="entry name" value="ThiG-like"/>
    <property type="match status" value="1"/>
</dbReference>
<sequence length="256" mass="27187">MLNIGPFSFHSRLLLGTGKFPDFDVQQKAIDVSEAEILTFAVRRMDIFDAKQPNLLEKLDVKKYTLLPNTAGAKNAEEAVRIAKLAKASGLCDMIKVEVIGDDRTLLPDPVETLKASEMLLEEGFIVLPYTSDDVVLARKLQELGVHAIMPGASPIGSGLGIVNPLNLSFIIEQATVPVIVDAGIGSPADAAFAMELGADGVLLNTAVSGAKDPIKMAQAMKLSIEAGRLGFEAGRIARKRCATASSPLEGMSVVE</sequence>
<evidence type="ECO:0000255" key="1">
    <source>
        <dbReference type="HAMAP-Rule" id="MF_00443"/>
    </source>
</evidence>
<reference key="1">
    <citation type="submission" date="2008-10" db="EMBL/GenBank/DDBJ databases">
        <title>Genome sequence of Bacillus cereus G9842.</title>
        <authorList>
            <person name="Dodson R.J."/>
            <person name="Durkin A.S."/>
            <person name="Rosovitz M.J."/>
            <person name="Rasko D.A."/>
            <person name="Hoffmaster A."/>
            <person name="Ravel J."/>
            <person name="Sutton G."/>
        </authorList>
    </citation>
    <scope>NUCLEOTIDE SEQUENCE [LARGE SCALE GENOMIC DNA]</scope>
    <source>
        <strain>G9842</strain>
    </source>
</reference>
<accession>B7IY02</accession>
<keyword id="KW-0963">Cytoplasm</keyword>
<keyword id="KW-0704">Schiff base</keyword>
<keyword id="KW-0784">Thiamine biosynthesis</keyword>
<keyword id="KW-0808">Transferase</keyword>
<comment type="function">
    <text evidence="1">Catalyzes the rearrangement of 1-deoxy-D-xylulose 5-phosphate (DXP) to produce the thiazole phosphate moiety of thiamine. Sulfur is provided by the thiocarboxylate moiety of the carrier protein ThiS. In vitro, sulfur can be provided by H(2)S.</text>
</comment>
<comment type="catalytic activity">
    <reaction evidence="1">
        <text>[ThiS sulfur-carrier protein]-C-terminal-Gly-aminoethanethioate + 2-iminoacetate + 1-deoxy-D-xylulose 5-phosphate = [ThiS sulfur-carrier protein]-C-terminal Gly-Gly + 2-[(2R,5Z)-2-carboxy-4-methylthiazol-5(2H)-ylidene]ethyl phosphate + 2 H2O + H(+)</text>
        <dbReference type="Rhea" id="RHEA:26297"/>
        <dbReference type="Rhea" id="RHEA-COMP:12909"/>
        <dbReference type="Rhea" id="RHEA-COMP:19908"/>
        <dbReference type="ChEBI" id="CHEBI:15377"/>
        <dbReference type="ChEBI" id="CHEBI:15378"/>
        <dbReference type="ChEBI" id="CHEBI:57792"/>
        <dbReference type="ChEBI" id="CHEBI:62899"/>
        <dbReference type="ChEBI" id="CHEBI:77846"/>
        <dbReference type="ChEBI" id="CHEBI:90778"/>
        <dbReference type="ChEBI" id="CHEBI:232372"/>
        <dbReference type="EC" id="2.8.1.10"/>
    </reaction>
</comment>
<comment type="pathway">
    <text evidence="1">Cofactor biosynthesis; thiamine diphosphate biosynthesis.</text>
</comment>
<comment type="subunit">
    <text evidence="1">Homotetramer. Forms heterodimers with either ThiH or ThiS.</text>
</comment>
<comment type="subcellular location">
    <subcellularLocation>
        <location evidence="1">Cytoplasm</location>
    </subcellularLocation>
</comment>
<comment type="similarity">
    <text evidence="1">Belongs to the ThiG family.</text>
</comment>